<protein>
    <recommendedName>
        <fullName>Histone H2B</fullName>
    </recommendedName>
</protein>
<accession>Q8J1K2</accession>
<proteinExistence type="inferred from homology"/>
<keyword id="KW-0007">Acetylation</keyword>
<keyword id="KW-0158">Chromosome</keyword>
<keyword id="KW-0238">DNA-binding</keyword>
<keyword id="KW-1017">Isopeptide bond</keyword>
<keyword id="KW-0544">Nucleosome core</keyword>
<keyword id="KW-0539">Nucleus</keyword>
<keyword id="KW-0832">Ubl conjugation</keyword>
<feature type="initiator methionine" description="Removed" evidence="1">
    <location>
        <position position="1"/>
    </location>
</feature>
<feature type="chain" id="PRO_0000071936" description="Histone H2B">
    <location>
        <begin position="2"/>
        <end position="136"/>
    </location>
</feature>
<feature type="region of interest" description="Disordered" evidence="2">
    <location>
        <begin position="1"/>
        <end position="44"/>
    </location>
</feature>
<feature type="compositionally biased region" description="Basic and acidic residues" evidence="2">
    <location>
        <begin position="1"/>
        <end position="10"/>
    </location>
</feature>
<feature type="modified residue" description="N6-acetyllysine; alternate" evidence="1">
    <location>
        <position position="8"/>
    </location>
</feature>
<feature type="modified residue" description="N6-acetyllysine; alternate" evidence="1">
    <location>
        <position position="9"/>
    </location>
</feature>
<feature type="modified residue" description="N6-acetyllysine" evidence="1">
    <location>
        <position position="13"/>
    </location>
</feature>
<feature type="modified residue" description="N6-acetyllysine; alternate" evidence="1">
    <location>
        <position position="23"/>
    </location>
</feature>
<feature type="cross-link" description="Glycyl lysine isopeptide (Lys-Gly) (interchain with G-Cter in SUMO); alternate" evidence="1">
    <location>
        <position position="8"/>
    </location>
</feature>
<feature type="cross-link" description="Glycyl lysine isopeptide (Lys-Gly) (interchain with G-Cter in SUMO); alternate" evidence="1">
    <location>
        <position position="9"/>
    </location>
</feature>
<feature type="cross-link" description="Glycyl lysine isopeptide (Lys-Gly) (interchain with G-Cter in SUMO); alternate" evidence="1">
    <location>
        <position position="23"/>
    </location>
</feature>
<feature type="cross-link" description="Glycyl lysine isopeptide (Lys-Gly) (interchain with G-Cter in SUMO)" evidence="1">
    <location>
        <position position="24"/>
    </location>
</feature>
<feature type="cross-link" description="Glycyl lysine isopeptide (Lys-Gly) (interchain with G-Cter in ubiquitin)" evidence="1">
    <location>
        <position position="130"/>
    </location>
</feature>
<sequence>MPPKAADKKPAAKAPVASKAPEKKDAGKKTASTGEKKKRTKARRETYSSYIYKVLKQVHPDTGISNRAMSILNSFVNDIFERVATEASKLAAYNKKSTISSREIQTSVRLILPGELAKHAVSEGTKAVTKYSSSTK</sequence>
<gene>
    <name type="primary">hh2b</name>
    <name type="synonym">htb1</name>
</gene>
<dbReference type="EMBL" id="AB085854">
    <property type="protein sequence ID" value="BAC54259.1"/>
    <property type="molecule type" value="Genomic_DNA"/>
</dbReference>
<dbReference type="SMR" id="Q8J1K2"/>
<dbReference type="OMA" id="FCPFAIR"/>
<dbReference type="OrthoDB" id="10254238at2759"/>
<dbReference type="GO" id="GO:0000786">
    <property type="term" value="C:nucleosome"/>
    <property type="evidence" value="ECO:0007669"/>
    <property type="project" value="UniProtKB-KW"/>
</dbReference>
<dbReference type="GO" id="GO:0005634">
    <property type="term" value="C:nucleus"/>
    <property type="evidence" value="ECO:0007669"/>
    <property type="project" value="UniProtKB-SubCell"/>
</dbReference>
<dbReference type="GO" id="GO:0003677">
    <property type="term" value="F:DNA binding"/>
    <property type="evidence" value="ECO:0007669"/>
    <property type="project" value="UniProtKB-KW"/>
</dbReference>
<dbReference type="GO" id="GO:0046982">
    <property type="term" value="F:protein heterodimerization activity"/>
    <property type="evidence" value="ECO:0007669"/>
    <property type="project" value="InterPro"/>
</dbReference>
<dbReference type="GO" id="GO:0030527">
    <property type="term" value="F:structural constituent of chromatin"/>
    <property type="evidence" value="ECO:0007669"/>
    <property type="project" value="InterPro"/>
</dbReference>
<dbReference type="CDD" id="cd22910">
    <property type="entry name" value="HFD_H2B"/>
    <property type="match status" value="1"/>
</dbReference>
<dbReference type="FunFam" id="1.10.20.10:FF:000014">
    <property type="entry name" value="Histone H2B"/>
    <property type="match status" value="1"/>
</dbReference>
<dbReference type="Gene3D" id="1.10.20.10">
    <property type="entry name" value="Histone, subunit A"/>
    <property type="match status" value="1"/>
</dbReference>
<dbReference type="InterPro" id="IPR009072">
    <property type="entry name" value="Histone-fold"/>
</dbReference>
<dbReference type="InterPro" id="IPR007125">
    <property type="entry name" value="Histone_H2A/H2B/H3"/>
</dbReference>
<dbReference type="InterPro" id="IPR000558">
    <property type="entry name" value="Histone_H2B"/>
</dbReference>
<dbReference type="InterPro" id="IPR055333">
    <property type="entry name" value="HISTONE_H2B_site"/>
</dbReference>
<dbReference type="PANTHER" id="PTHR23428">
    <property type="entry name" value="HISTONE H2B"/>
    <property type="match status" value="1"/>
</dbReference>
<dbReference type="Pfam" id="PF00125">
    <property type="entry name" value="Histone"/>
    <property type="match status" value="1"/>
</dbReference>
<dbReference type="PRINTS" id="PR00621">
    <property type="entry name" value="HISTONEH2B"/>
</dbReference>
<dbReference type="SMART" id="SM00427">
    <property type="entry name" value="H2B"/>
    <property type="match status" value="1"/>
</dbReference>
<dbReference type="SUPFAM" id="SSF47113">
    <property type="entry name" value="Histone-fold"/>
    <property type="match status" value="1"/>
</dbReference>
<dbReference type="PROSITE" id="PS00357">
    <property type="entry name" value="HISTONE_H2B"/>
    <property type="match status" value="1"/>
</dbReference>
<reference key="1">
    <citation type="journal article" date="2002" name="DNA Seq.">
        <title>Primary structure of the histone 2B gene in the white root rot fungus, Rosellinia necatrix.</title>
        <authorList>
            <person name="Aimi T."/>
            <person name="Taguchi H."/>
            <person name="Morinaga T."/>
        </authorList>
    </citation>
    <scope>NUCLEOTIDE SEQUENCE [GENOMIC DNA]</scope>
    <source>
        <strain>W20</strain>
    </source>
</reference>
<evidence type="ECO:0000250" key="1"/>
<evidence type="ECO:0000256" key="2">
    <source>
        <dbReference type="SAM" id="MobiDB-lite"/>
    </source>
</evidence>
<evidence type="ECO:0000305" key="3"/>
<name>H2B_ROSNE</name>
<comment type="function">
    <text>Core component of nucleosome. Nucleosomes wrap and compact DNA into chromatin, limiting DNA accessibility to the cellular machineries which require DNA as a template. Histones thereby play a central role in transcription regulation, DNA repair, DNA replication and chromosomal stability. DNA accessibility is regulated via a complex set of post-translational modifications of histones, also called histone code, and nucleosome remodeling.</text>
</comment>
<comment type="subunit">
    <text>The nucleosome is a histone octamer containing two molecules each of H2A, H2B, H3 and H4 assembled in one H3-H4 heterotetramer and two H2A-H2B heterodimers. The octamer wraps approximately 147 bp of DNA.</text>
</comment>
<comment type="subcellular location">
    <subcellularLocation>
        <location evidence="1">Nucleus</location>
    </subcellularLocation>
    <subcellularLocation>
        <location evidence="1">Chromosome</location>
    </subcellularLocation>
</comment>
<comment type="PTM">
    <text evidence="1">Monoubiquitinated to form H2BK123ub1. H2BK123ub1 gives a specific tag for epigenetic transcriptional activation and is also prerequisite for H3K4me and H3K79me formation. H2BK123ub1 also modulates the formation of double-strand breaks during meiosis and is a prerequisite for DNA-damage checkpoint activation (By similarity).</text>
</comment>
<comment type="PTM">
    <text evidence="1">Acetylated by GCN5 to form H2BK11ac and H2BK16ac. H2BK16ac can also be formed by ESA1. Acetylation of N-terminal lysines and particularly formation of H2BK11acK16ac has a positive effect on transcription (By similarity).</text>
</comment>
<comment type="PTM">
    <text evidence="1">Sumoylation to form H2BK6su or H2BK7su, and probably also H2BK16su or H2BK17su, occurs preferentially near the telomeres and represses gene transcription.</text>
</comment>
<comment type="similarity">
    <text evidence="3">Belongs to the histone H2B family.</text>
</comment>
<comment type="caution">
    <text evidence="3">To ensure consistency between histone entries, we follow the 'Brno' nomenclature for histone modifications, with positions referring to those used in the literature for the 'closest' model organism. Due to slight variations in histone sequences between organisms and to the presence of initiator methionine in UniProtKB/Swiss-Prot sequences, the actual positions of modified amino acids in the sequence generally differ. In this entry the following conventions are used: H2BK6ac = acetylated Lys-8; H2BK6su = sumoylated Lys-8; H2BK7ac = acetylated Lys-9; H2BK7su = sumoylated Lys-9; H2BK11ac = acetylated Lys-13; H2BK16ac = acetylated Lys-23; H2BK16su = sumoylated Lys-23; H2BK17su = sumoylated Lys-24; H2BK123ub1 = monoubiquitinated Lys-130.</text>
</comment>
<organism>
    <name type="scientific">Rosellinia necatrix</name>
    <name type="common">White root-rot fungus</name>
    <dbReference type="NCBI Taxonomy" id="77044"/>
    <lineage>
        <taxon>Eukaryota</taxon>
        <taxon>Fungi</taxon>
        <taxon>Dikarya</taxon>
        <taxon>Ascomycota</taxon>
        <taxon>Pezizomycotina</taxon>
        <taxon>Sordariomycetes</taxon>
        <taxon>Xylariomycetidae</taxon>
        <taxon>Xylariales</taxon>
        <taxon>Xylariaceae</taxon>
        <taxon>Rosellinia</taxon>
    </lineage>
</organism>